<keyword id="KW-0134">Cell wall</keyword>
<keyword id="KW-0961">Cell wall biogenesis/degradation</keyword>
<keyword id="KW-0165">Cleavage on pair of basic residues</keyword>
<keyword id="KW-0325">Glycoprotein</keyword>
<keyword id="KW-0677">Repeat</keyword>
<keyword id="KW-0964">Secreted</keyword>
<keyword id="KW-0732">Signal</keyword>
<sequence length="341" mass="34638">MQYKKSLVASALVTTSLAAYAPKDPWSTLTPSATYKGGITDYSSTFGIAVEPIATTASSKAKRAAAISQIGDGQIQATTKTTAAAVSQIGDGQIQATTKTKAAAVSQIGDGQIQATTKTTSAKTTAAAVSQIGDGQIQATTKTKAAAVSQIGDGQIQATTKTTAAAVSQIGDGQIQATTKTTAAAVSQIGDGQIQATTNTTVAPVSQITDGQIQATTLTSATIIPSPAPAPITNGTDPVTAETCKSSGTLEMNLKGGILTDGKGRIGSIVANRQFQFDGPPPQAGAIYAAGWSITPEGNLAIGDQDTFYQCLSGNFYNLYDEHIGTQCNAVHLQAIDLVNC</sequence>
<comment type="function">
    <text evidence="1">Component of the outer cell wall layer. Required for stability of the cell wall and for optimal growth. Required for resistance against several antifungal and cell wall-perturbing agents and for tolerance to heat shock (By similarity).</text>
</comment>
<comment type="subcellular location">
    <subcellularLocation>
        <location evidence="1">Secreted</location>
        <location evidence="1">Cell wall</location>
    </subcellularLocation>
    <text evidence="1">Covalently attached to the cell wall.</text>
</comment>
<comment type="domain">
    <text evidence="1">The PIR1/2/3 repeats are required for the covalent linkage to the cell wall (By similarity). Their number varies among different strains of S.cerevisiae.</text>
</comment>
<comment type="PTM">
    <text evidence="1">Covalently linked to beta-1,3-glucan of the inner cell wall layer via an alkali-sensitive ester linkage between the gamma-carboxyl group of glutamic acids, arising from specific glutamines within the PIR1/2/3 repeats, and hydroxyl groups of glucoses of beta-1,3-glucan chains.</text>
</comment>
<comment type="PTM">
    <text evidence="1">O-glycosylated. Extensively O-mannosylated (By similarity).</text>
</comment>
<comment type="similarity">
    <text evidence="2">Belongs to the PIR protein family.</text>
</comment>
<organism>
    <name type="scientific">Saccharomyces cerevisiae (strain RM11-1a)</name>
    <name type="common">Baker's yeast</name>
    <dbReference type="NCBI Taxonomy" id="285006"/>
    <lineage>
        <taxon>Eukaryota</taxon>
        <taxon>Fungi</taxon>
        <taxon>Dikarya</taxon>
        <taxon>Ascomycota</taxon>
        <taxon>Saccharomycotina</taxon>
        <taxon>Saccharomycetes</taxon>
        <taxon>Saccharomycetales</taxon>
        <taxon>Saccharomycetaceae</taxon>
        <taxon>Saccharomyces</taxon>
    </lineage>
</organism>
<dbReference type="EMBL" id="CH408051">
    <property type="protein sequence ID" value="EDV12943.1"/>
    <property type="molecule type" value="Genomic_DNA"/>
</dbReference>
<dbReference type="HOGENOM" id="CLU_039662_0_0_1"/>
<dbReference type="OrthoDB" id="40414at4893"/>
<dbReference type="Proteomes" id="UP000008335">
    <property type="component" value="Unassembled WGS sequence"/>
</dbReference>
<dbReference type="GO" id="GO:0005576">
    <property type="term" value="C:extracellular region"/>
    <property type="evidence" value="ECO:0007669"/>
    <property type="project" value="UniProtKB-KW"/>
</dbReference>
<dbReference type="GO" id="GO:0009277">
    <property type="term" value="C:fungal-type cell wall"/>
    <property type="evidence" value="ECO:0007669"/>
    <property type="project" value="TreeGrafter"/>
</dbReference>
<dbReference type="GO" id="GO:0005199">
    <property type="term" value="F:structural constituent of cell wall"/>
    <property type="evidence" value="ECO:0007669"/>
    <property type="project" value="InterPro"/>
</dbReference>
<dbReference type="GO" id="GO:0031505">
    <property type="term" value="P:fungal-type cell wall organization"/>
    <property type="evidence" value="ECO:0007669"/>
    <property type="project" value="UniProtKB-ARBA"/>
</dbReference>
<dbReference type="InterPro" id="IPR054508">
    <property type="entry name" value="PIR1-like_C"/>
</dbReference>
<dbReference type="InterPro" id="IPR051153">
    <property type="entry name" value="Yeast_CWMannoprotein_PIR"/>
</dbReference>
<dbReference type="InterPro" id="IPR000420">
    <property type="entry name" value="Yeast_PIR_rpt"/>
</dbReference>
<dbReference type="PANTHER" id="PTHR47254">
    <property type="entry name" value="CELL WALL MANNOPROTEIN CIS3-RELATED"/>
    <property type="match status" value="1"/>
</dbReference>
<dbReference type="PANTHER" id="PTHR47254:SF1">
    <property type="entry name" value="CELL WALL MANNOPROTEIN CIS3-RELATED"/>
    <property type="match status" value="1"/>
</dbReference>
<dbReference type="Pfam" id="PF00399">
    <property type="entry name" value="PIR"/>
    <property type="match status" value="8"/>
</dbReference>
<dbReference type="Pfam" id="PF22799">
    <property type="entry name" value="PIR1-like_C"/>
    <property type="match status" value="1"/>
</dbReference>
<dbReference type="PROSITE" id="PS00929">
    <property type="entry name" value="PIR_REPEAT_1"/>
    <property type="match status" value="8"/>
</dbReference>
<dbReference type="PROSITE" id="PS50256">
    <property type="entry name" value="PIR_REPEAT_2"/>
    <property type="match status" value="8"/>
</dbReference>
<gene>
    <name type="primary">PIR1</name>
    <name type="ORF">SCRG_03863</name>
</gene>
<accession>B3LQU0</accession>
<feature type="signal peptide" evidence="1">
    <location>
        <begin position="1"/>
        <end position="18"/>
    </location>
</feature>
<feature type="propeptide" id="PRO_0000377602" evidence="1">
    <location>
        <begin position="19"/>
        <end position="63"/>
    </location>
</feature>
<feature type="chain" id="PRO_0000377603" description="Cell wall mannoprotein PIR1">
    <location>
        <begin position="64"/>
        <end position="341"/>
    </location>
</feature>
<feature type="repeat" description="PIR1/2/3 1">
    <location>
        <begin position="64"/>
        <end position="82"/>
    </location>
</feature>
<feature type="repeat" description="PIR1/2/3 2">
    <location>
        <begin position="83"/>
        <end position="101"/>
    </location>
</feature>
<feature type="repeat" description="PIR1/2/3 3">
    <location>
        <begin position="102"/>
        <end position="120"/>
    </location>
</feature>
<feature type="repeat" description="PIR1/2/3 4">
    <location>
        <begin position="126"/>
        <end position="144"/>
    </location>
</feature>
<feature type="repeat" description="PIR1/2/3 5">
    <location>
        <begin position="145"/>
        <end position="163"/>
    </location>
</feature>
<feature type="repeat" description="PIR1/2/3 6">
    <location>
        <begin position="164"/>
        <end position="182"/>
    </location>
</feature>
<feature type="repeat" description="PIR1/2/3 7">
    <location>
        <begin position="183"/>
        <end position="201"/>
    </location>
</feature>
<feature type="repeat" description="PIR1/2/3 8">
    <location>
        <begin position="202"/>
        <end position="220"/>
    </location>
</feature>
<feature type="site" description="Cleavage; by KEX2" evidence="1">
    <location>
        <begin position="63"/>
        <end position="64"/>
    </location>
</feature>
<feature type="site" description="Covalent attachment to cell wall glycan" evidence="1">
    <location>
        <position position="74"/>
    </location>
</feature>
<feature type="site" description="Covalent attachment to cell wall glycan" evidence="1">
    <location>
        <position position="93"/>
    </location>
</feature>
<feature type="site" description="Covalent attachment to cell wall glycan" evidence="1">
    <location>
        <position position="112"/>
    </location>
</feature>
<feature type="site" description="Covalent attachment to cell wall glycan" evidence="1">
    <location>
        <position position="136"/>
    </location>
</feature>
<feature type="site" description="Covalent attachment to cell wall glycan" evidence="1">
    <location>
        <position position="155"/>
    </location>
</feature>
<feature type="site" description="Covalent attachment to cell wall glycan" evidence="1">
    <location>
        <position position="174"/>
    </location>
</feature>
<feature type="site" description="Covalent attachment to cell wall glycan" evidence="1">
    <location>
        <position position="193"/>
    </location>
</feature>
<feature type="site" description="Covalent attachment to cell wall glycan" evidence="1">
    <location>
        <position position="212"/>
    </location>
</feature>
<evidence type="ECO:0000250" key="1"/>
<evidence type="ECO:0000305" key="2"/>
<protein>
    <recommendedName>
        <fullName>Cell wall mannoprotein PIR1</fullName>
    </recommendedName>
    <alternativeName>
        <fullName>Covalently-linked cell wall protein 6</fullName>
    </alternativeName>
    <alternativeName>
        <fullName>Protein with internal repeats 1</fullName>
    </alternativeName>
</protein>
<proteinExistence type="inferred from homology"/>
<reference key="1">
    <citation type="submission" date="2005-03" db="EMBL/GenBank/DDBJ databases">
        <title>Annotation of the Saccharomyces cerevisiae RM11-1a genome.</title>
        <authorList>
            <consortium name="The Broad Institute Genome Sequencing Platform"/>
            <person name="Birren B.W."/>
            <person name="Lander E.S."/>
            <person name="Galagan J.E."/>
            <person name="Nusbaum C."/>
            <person name="Devon K."/>
            <person name="Cuomo C."/>
            <person name="Jaffe D.B."/>
            <person name="Butler J."/>
            <person name="Alvarez P."/>
            <person name="Gnerre S."/>
            <person name="Grabherr M."/>
            <person name="Kleber M."/>
            <person name="Mauceli E.W."/>
            <person name="Brockman W."/>
            <person name="MacCallum I.A."/>
            <person name="Rounsley S."/>
            <person name="Young S.K."/>
            <person name="LaButti K."/>
            <person name="Pushparaj V."/>
            <person name="DeCaprio D."/>
            <person name="Crawford M."/>
            <person name="Koehrsen M."/>
            <person name="Engels R."/>
            <person name="Montgomery P."/>
            <person name="Pearson M."/>
            <person name="Howarth C."/>
            <person name="Larson L."/>
            <person name="Luoma S."/>
            <person name="White J."/>
            <person name="O'Leary S."/>
            <person name="Kodira C.D."/>
            <person name="Zeng Q."/>
            <person name="Yandava C."/>
            <person name="Alvarado L."/>
            <person name="Pratt S."/>
            <person name="Kruglyak L."/>
        </authorList>
    </citation>
    <scope>NUCLEOTIDE SEQUENCE [LARGE SCALE GENOMIC DNA]</scope>
    <source>
        <strain>RM11-1a</strain>
    </source>
</reference>
<name>PIR1_YEAS1</name>